<keyword id="KW-0963">Cytoplasm</keyword>
<keyword id="KW-1185">Reference proteome</keyword>
<keyword id="KW-0704">Schiff base</keyword>
<keyword id="KW-0784">Thiamine biosynthesis</keyword>
<keyword id="KW-0808">Transferase</keyword>
<proteinExistence type="inferred from homology"/>
<comment type="function">
    <text evidence="1">Catalyzes the rearrangement of 1-deoxy-D-xylulose 5-phosphate (DXP) to produce the thiazole phosphate moiety of thiamine. Sulfur is provided by the thiocarboxylate moiety of the carrier protein ThiS. In vitro, sulfur can be provided by H(2)S.</text>
</comment>
<comment type="catalytic activity">
    <reaction evidence="1">
        <text>[ThiS sulfur-carrier protein]-C-terminal-Gly-aminoethanethioate + 2-iminoacetate + 1-deoxy-D-xylulose 5-phosphate = [ThiS sulfur-carrier protein]-C-terminal Gly-Gly + 2-[(2R,5Z)-2-carboxy-4-methylthiazol-5(2H)-ylidene]ethyl phosphate + 2 H2O + H(+)</text>
        <dbReference type="Rhea" id="RHEA:26297"/>
        <dbReference type="Rhea" id="RHEA-COMP:12909"/>
        <dbReference type="Rhea" id="RHEA-COMP:19908"/>
        <dbReference type="ChEBI" id="CHEBI:15377"/>
        <dbReference type="ChEBI" id="CHEBI:15378"/>
        <dbReference type="ChEBI" id="CHEBI:57792"/>
        <dbReference type="ChEBI" id="CHEBI:62899"/>
        <dbReference type="ChEBI" id="CHEBI:77846"/>
        <dbReference type="ChEBI" id="CHEBI:90778"/>
        <dbReference type="ChEBI" id="CHEBI:232372"/>
        <dbReference type="EC" id="2.8.1.10"/>
    </reaction>
</comment>
<comment type="pathway">
    <text evidence="1">Cofactor biosynthesis; thiamine diphosphate biosynthesis.</text>
</comment>
<comment type="subunit">
    <text evidence="1">Homotetramer. Forms heterodimers with either ThiH or ThiS.</text>
</comment>
<comment type="subcellular location">
    <subcellularLocation>
        <location evidence="1">Cytoplasm</location>
    </subcellularLocation>
</comment>
<comment type="similarity">
    <text evidence="1">Belongs to the ThiG family.</text>
</comment>
<reference key="1">
    <citation type="journal article" date="2005" name="Proc. Natl. Acad. Sci. U.S.A.">
        <title>Complete genome sequence of Vibrio fischeri: a symbiotic bacterium with pathogenic congeners.</title>
        <authorList>
            <person name="Ruby E.G."/>
            <person name="Urbanowski M."/>
            <person name="Campbell J."/>
            <person name="Dunn A."/>
            <person name="Faini M."/>
            <person name="Gunsalus R."/>
            <person name="Lostroh P."/>
            <person name="Lupp C."/>
            <person name="McCann J."/>
            <person name="Millikan D."/>
            <person name="Schaefer A."/>
            <person name="Stabb E."/>
            <person name="Stevens A."/>
            <person name="Visick K."/>
            <person name="Whistler C."/>
            <person name="Greenberg E.P."/>
        </authorList>
    </citation>
    <scope>NUCLEOTIDE SEQUENCE [LARGE SCALE GENOMIC DNA]</scope>
    <source>
        <strain>ATCC 700601 / ES114</strain>
    </source>
</reference>
<accession>Q5E8W6</accession>
<feature type="chain" id="PRO_0000162871" description="Thiazole synthase">
    <location>
        <begin position="1"/>
        <end position="256"/>
    </location>
</feature>
<feature type="active site" description="Schiff-base intermediate with DXP" evidence="1">
    <location>
        <position position="98"/>
    </location>
</feature>
<feature type="binding site" evidence="1">
    <location>
        <position position="159"/>
    </location>
    <ligand>
        <name>1-deoxy-D-xylulose 5-phosphate</name>
        <dbReference type="ChEBI" id="CHEBI:57792"/>
    </ligand>
</feature>
<feature type="binding site" evidence="1">
    <location>
        <begin position="185"/>
        <end position="186"/>
    </location>
    <ligand>
        <name>1-deoxy-D-xylulose 5-phosphate</name>
        <dbReference type="ChEBI" id="CHEBI:57792"/>
    </ligand>
</feature>
<feature type="binding site" evidence="1">
    <location>
        <begin position="207"/>
        <end position="208"/>
    </location>
    <ligand>
        <name>1-deoxy-D-xylulose 5-phosphate</name>
        <dbReference type="ChEBI" id="CHEBI:57792"/>
    </ligand>
</feature>
<dbReference type="EC" id="2.8.1.10" evidence="1"/>
<dbReference type="EMBL" id="CP000020">
    <property type="protein sequence ID" value="AAW84530.1"/>
    <property type="molecule type" value="Genomic_DNA"/>
</dbReference>
<dbReference type="RefSeq" id="WP_011260916.1">
    <property type="nucleotide sequence ID" value="NC_006840.2"/>
</dbReference>
<dbReference type="RefSeq" id="YP_203418.1">
    <property type="nucleotide sequence ID" value="NC_006840.2"/>
</dbReference>
<dbReference type="SMR" id="Q5E8W6"/>
<dbReference type="STRING" id="312309.VF_0035"/>
<dbReference type="EnsemblBacteria" id="AAW84530">
    <property type="protein sequence ID" value="AAW84530"/>
    <property type="gene ID" value="VF_0035"/>
</dbReference>
<dbReference type="GeneID" id="54162666"/>
<dbReference type="KEGG" id="vfi:VF_0035"/>
<dbReference type="PATRIC" id="fig|312309.11.peg.38"/>
<dbReference type="eggNOG" id="COG2022">
    <property type="taxonomic scope" value="Bacteria"/>
</dbReference>
<dbReference type="HOGENOM" id="CLU_062233_1_0_6"/>
<dbReference type="OrthoDB" id="9805935at2"/>
<dbReference type="UniPathway" id="UPA00060"/>
<dbReference type="Proteomes" id="UP000000537">
    <property type="component" value="Chromosome I"/>
</dbReference>
<dbReference type="GO" id="GO:0005737">
    <property type="term" value="C:cytoplasm"/>
    <property type="evidence" value="ECO:0007669"/>
    <property type="project" value="UniProtKB-SubCell"/>
</dbReference>
<dbReference type="GO" id="GO:1990107">
    <property type="term" value="F:thiazole synthase activity"/>
    <property type="evidence" value="ECO:0007669"/>
    <property type="project" value="UniProtKB-EC"/>
</dbReference>
<dbReference type="GO" id="GO:0009229">
    <property type="term" value="P:thiamine diphosphate biosynthetic process"/>
    <property type="evidence" value="ECO:0007669"/>
    <property type="project" value="UniProtKB-UniRule"/>
</dbReference>
<dbReference type="CDD" id="cd04728">
    <property type="entry name" value="ThiG"/>
    <property type="match status" value="1"/>
</dbReference>
<dbReference type="FunFam" id="3.20.20.70:FF:000049">
    <property type="entry name" value="Thiazole synthase"/>
    <property type="match status" value="1"/>
</dbReference>
<dbReference type="Gene3D" id="3.20.20.70">
    <property type="entry name" value="Aldolase class I"/>
    <property type="match status" value="1"/>
</dbReference>
<dbReference type="HAMAP" id="MF_00443">
    <property type="entry name" value="ThiG"/>
    <property type="match status" value="1"/>
</dbReference>
<dbReference type="InterPro" id="IPR013785">
    <property type="entry name" value="Aldolase_TIM"/>
</dbReference>
<dbReference type="InterPro" id="IPR033983">
    <property type="entry name" value="Thiazole_synthase_ThiG"/>
</dbReference>
<dbReference type="InterPro" id="IPR008867">
    <property type="entry name" value="ThiG"/>
</dbReference>
<dbReference type="PANTHER" id="PTHR34266">
    <property type="entry name" value="THIAZOLE SYNTHASE"/>
    <property type="match status" value="1"/>
</dbReference>
<dbReference type="PANTHER" id="PTHR34266:SF2">
    <property type="entry name" value="THIAZOLE SYNTHASE"/>
    <property type="match status" value="1"/>
</dbReference>
<dbReference type="Pfam" id="PF05690">
    <property type="entry name" value="ThiG"/>
    <property type="match status" value="1"/>
</dbReference>
<dbReference type="SUPFAM" id="SSF110399">
    <property type="entry name" value="ThiG-like"/>
    <property type="match status" value="1"/>
</dbReference>
<sequence>MNDLLTIGDKTFRSRLFTGTGKFPNASVMQKALIESGSELSTMALKRVEVNNPEDNILKPIVDAGINLLPNTSGAKNAREAIFAAQLAREALGTNWLKLEIHPDPKYLMPDPIETLTAAEELVKQGFIVLPYCHADPVLCKRLEEVGCAAVMPLGAPIGSNKGIVSRDFLEIIIDQARVPVVVDAGIGAPSHAALAMELGADAVLVNTAIAAARNPIAMATAFKLAVQSGRLAYENGLASVNTQAVASSPLTAFLD</sequence>
<evidence type="ECO:0000255" key="1">
    <source>
        <dbReference type="HAMAP-Rule" id="MF_00443"/>
    </source>
</evidence>
<name>THIG_ALIF1</name>
<gene>
    <name evidence="1" type="primary">thiG</name>
    <name type="ordered locus">VF_0035</name>
</gene>
<organism>
    <name type="scientific">Aliivibrio fischeri (strain ATCC 700601 / ES114)</name>
    <name type="common">Vibrio fischeri</name>
    <dbReference type="NCBI Taxonomy" id="312309"/>
    <lineage>
        <taxon>Bacteria</taxon>
        <taxon>Pseudomonadati</taxon>
        <taxon>Pseudomonadota</taxon>
        <taxon>Gammaproteobacteria</taxon>
        <taxon>Vibrionales</taxon>
        <taxon>Vibrionaceae</taxon>
        <taxon>Aliivibrio</taxon>
    </lineage>
</organism>
<protein>
    <recommendedName>
        <fullName evidence="1">Thiazole synthase</fullName>
        <ecNumber evidence="1">2.8.1.10</ecNumber>
    </recommendedName>
</protein>